<evidence type="ECO:0000255" key="1">
    <source>
        <dbReference type="HAMAP-Rule" id="MF_01813"/>
    </source>
</evidence>
<proteinExistence type="inferred from homology"/>
<protein>
    <recommendedName>
        <fullName evidence="1">Demethylmenaquinone methyltransferase</fullName>
        <ecNumber evidence="1">2.1.1.163</ecNumber>
    </recommendedName>
</protein>
<accession>A9WRT1</accession>
<dbReference type="EC" id="2.1.1.163" evidence="1"/>
<dbReference type="EMBL" id="CP000910">
    <property type="protein sequence ID" value="ABY24363.1"/>
    <property type="molecule type" value="Genomic_DNA"/>
</dbReference>
<dbReference type="RefSeq" id="WP_012246018.1">
    <property type="nucleotide sequence ID" value="NC_010168.1"/>
</dbReference>
<dbReference type="SMR" id="A9WRT1"/>
<dbReference type="STRING" id="288705.RSal33209_2638"/>
<dbReference type="KEGG" id="rsa:RSal33209_2638"/>
<dbReference type="eggNOG" id="COG2226">
    <property type="taxonomic scope" value="Bacteria"/>
</dbReference>
<dbReference type="HOGENOM" id="CLU_037990_0_0_11"/>
<dbReference type="UniPathway" id="UPA00079">
    <property type="reaction ID" value="UER00169"/>
</dbReference>
<dbReference type="Proteomes" id="UP000002007">
    <property type="component" value="Chromosome"/>
</dbReference>
<dbReference type="GO" id="GO:0043770">
    <property type="term" value="F:demethylmenaquinone methyltransferase activity"/>
    <property type="evidence" value="ECO:0007669"/>
    <property type="project" value="UniProtKB-UniRule"/>
</dbReference>
<dbReference type="GO" id="GO:0009234">
    <property type="term" value="P:menaquinone biosynthetic process"/>
    <property type="evidence" value="ECO:0007669"/>
    <property type="project" value="UniProtKB-UniRule"/>
</dbReference>
<dbReference type="GO" id="GO:0032259">
    <property type="term" value="P:methylation"/>
    <property type="evidence" value="ECO:0007669"/>
    <property type="project" value="UniProtKB-KW"/>
</dbReference>
<dbReference type="CDD" id="cd02440">
    <property type="entry name" value="AdoMet_MTases"/>
    <property type="match status" value="1"/>
</dbReference>
<dbReference type="Gene3D" id="3.40.50.150">
    <property type="entry name" value="Vaccinia Virus protein VP39"/>
    <property type="match status" value="1"/>
</dbReference>
<dbReference type="HAMAP" id="MF_01813">
    <property type="entry name" value="MenG_UbiE_methyltr"/>
    <property type="match status" value="1"/>
</dbReference>
<dbReference type="InterPro" id="IPR029063">
    <property type="entry name" value="SAM-dependent_MTases_sf"/>
</dbReference>
<dbReference type="InterPro" id="IPR004033">
    <property type="entry name" value="UbiE/COQ5_MeTrFase"/>
</dbReference>
<dbReference type="InterPro" id="IPR023576">
    <property type="entry name" value="UbiE/COQ5_MeTrFase_CS"/>
</dbReference>
<dbReference type="NCBIfam" id="TIGR01934">
    <property type="entry name" value="MenG_MenH_UbiE"/>
    <property type="match status" value="1"/>
</dbReference>
<dbReference type="NCBIfam" id="NF001241">
    <property type="entry name" value="PRK00216.1-2"/>
    <property type="match status" value="1"/>
</dbReference>
<dbReference type="PANTHER" id="PTHR43591:SF24">
    <property type="entry name" value="2-METHOXY-6-POLYPRENYL-1,4-BENZOQUINOL METHYLASE, MITOCHONDRIAL"/>
    <property type="match status" value="1"/>
</dbReference>
<dbReference type="PANTHER" id="PTHR43591">
    <property type="entry name" value="METHYLTRANSFERASE"/>
    <property type="match status" value="1"/>
</dbReference>
<dbReference type="Pfam" id="PF01209">
    <property type="entry name" value="Ubie_methyltran"/>
    <property type="match status" value="1"/>
</dbReference>
<dbReference type="SUPFAM" id="SSF53335">
    <property type="entry name" value="S-adenosyl-L-methionine-dependent methyltransferases"/>
    <property type="match status" value="1"/>
</dbReference>
<dbReference type="PROSITE" id="PS51608">
    <property type="entry name" value="SAM_MT_UBIE"/>
    <property type="match status" value="1"/>
</dbReference>
<dbReference type="PROSITE" id="PS01184">
    <property type="entry name" value="UBIE_2"/>
    <property type="match status" value="1"/>
</dbReference>
<name>MENG_RENSM</name>
<organism>
    <name type="scientific">Renibacterium salmoninarum (strain ATCC 33209 / DSM 20767 / JCM 11484 / NBRC 15589 / NCIMB 2235)</name>
    <dbReference type="NCBI Taxonomy" id="288705"/>
    <lineage>
        <taxon>Bacteria</taxon>
        <taxon>Bacillati</taxon>
        <taxon>Actinomycetota</taxon>
        <taxon>Actinomycetes</taxon>
        <taxon>Micrococcales</taxon>
        <taxon>Micrococcaceae</taxon>
        <taxon>Renibacterium</taxon>
    </lineage>
</organism>
<keyword id="KW-0474">Menaquinone biosynthesis</keyword>
<keyword id="KW-0489">Methyltransferase</keyword>
<keyword id="KW-1185">Reference proteome</keyword>
<keyword id="KW-0949">S-adenosyl-L-methionine</keyword>
<keyword id="KW-0808">Transferase</keyword>
<gene>
    <name evidence="1" type="primary">menG</name>
    <name type="ordered locus">RSal33209_2638</name>
</gene>
<reference key="1">
    <citation type="journal article" date="2008" name="J. Bacteriol.">
        <title>Genome sequence of the fish pathogen Renibacterium salmoninarum suggests reductive evolution away from an environmental Arthrobacter ancestor.</title>
        <authorList>
            <person name="Wiens G.D."/>
            <person name="Rockey D.D."/>
            <person name="Wu Z."/>
            <person name="Chang J."/>
            <person name="Levy R."/>
            <person name="Crane S."/>
            <person name="Chen D.S."/>
            <person name="Capri G.R."/>
            <person name="Burnett J.R."/>
            <person name="Sudheesh P.S."/>
            <person name="Schipma M.J."/>
            <person name="Burd H."/>
            <person name="Bhattacharyya A."/>
            <person name="Rhodes L.D."/>
            <person name="Kaul R."/>
            <person name="Strom M.S."/>
        </authorList>
    </citation>
    <scope>NUCLEOTIDE SEQUENCE [LARGE SCALE GENOMIC DNA]</scope>
    <source>
        <strain>ATCC 33209 / DSM 20767 / JCM 11484 / NBRC 15589 / NCIMB 2235</strain>
    </source>
</reference>
<feature type="chain" id="PRO_1000088289" description="Demethylmenaquinone methyltransferase">
    <location>
        <begin position="1"/>
        <end position="237"/>
    </location>
</feature>
<feature type="binding site" evidence="1">
    <location>
        <position position="62"/>
    </location>
    <ligand>
        <name>S-adenosyl-L-methionine</name>
        <dbReference type="ChEBI" id="CHEBI:59789"/>
    </ligand>
</feature>
<feature type="binding site" evidence="1">
    <location>
        <position position="80"/>
    </location>
    <ligand>
        <name>S-adenosyl-L-methionine</name>
        <dbReference type="ChEBI" id="CHEBI:59789"/>
    </ligand>
</feature>
<feature type="binding site" evidence="1">
    <location>
        <begin position="102"/>
        <end position="103"/>
    </location>
    <ligand>
        <name>S-adenosyl-L-methionine</name>
        <dbReference type="ChEBI" id="CHEBI:59789"/>
    </ligand>
</feature>
<feature type="binding site" evidence="1">
    <location>
        <position position="119"/>
    </location>
    <ligand>
        <name>S-adenosyl-L-methionine</name>
        <dbReference type="ChEBI" id="CHEBI:59789"/>
    </ligand>
</feature>
<comment type="function">
    <text evidence="1">Methyltransferase required for the conversion of demethylmenaquinol (DMKH2) to menaquinol (MKH2).</text>
</comment>
<comment type="catalytic activity">
    <reaction evidence="1">
        <text>a 2-demethylmenaquinol + S-adenosyl-L-methionine = a menaquinol + S-adenosyl-L-homocysteine + H(+)</text>
        <dbReference type="Rhea" id="RHEA:42640"/>
        <dbReference type="Rhea" id="RHEA-COMP:9539"/>
        <dbReference type="Rhea" id="RHEA-COMP:9563"/>
        <dbReference type="ChEBI" id="CHEBI:15378"/>
        <dbReference type="ChEBI" id="CHEBI:18151"/>
        <dbReference type="ChEBI" id="CHEBI:55437"/>
        <dbReference type="ChEBI" id="CHEBI:57856"/>
        <dbReference type="ChEBI" id="CHEBI:59789"/>
        <dbReference type="EC" id="2.1.1.163"/>
    </reaction>
</comment>
<comment type="pathway">
    <text evidence="1">Quinol/quinone metabolism; menaquinone biosynthesis; menaquinol from 1,4-dihydroxy-2-naphthoate: step 2/2.</text>
</comment>
<comment type="similarity">
    <text evidence="1">Belongs to the class I-like SAM-binding methyltransferase superfamily. MenG/UbiE family.</text>
</comment>
<sequence length="237" mass="25864">MSRASLDKRPDEVAAMFDDVAPKYDVTNDVLSMGQTRRWRRLVVDAVGAVPGQRVLDVAAGTGTSSEPYADAGLDVVALDFSLGMLKVGKRRRPDIDFIAGDATALPFADNSFDAVTISFGLRNVNEPKKALAEMLRVTKPGGKLVVAEFSHPTFGPFRTVYTEYLMRALPAIANRSSSNPSAYVYLAESIRAWPDQDNLAQWIADVGWSDVSYRNLNGGLVALHRAFKEGKLEAKP</sequence>